<accession>P86158</accession>
<comment type="subcellular location">
    <subcellularLocation>
        <location evidence="1 2">Secreted</location>
    </subcellularLocation>
</comment>
<comment type="tissue specificity">
    <text evidence="1 2">Expressed by the skin glands.</text>
</comment>
<comment type="mass spectrometry" mass="2361.43" method="Electrospray" evidence="2"/>
<feature type="peptide" id="PRO_0000373060" description="Melittin-related peptide FQ-22-1" evidence="1">
    <location>
        <begin position="1"/>
        <end position="22"/>
    </location>
</feature>
<feature type="modified residue" description="Glutamine amide" evidence="1">
    <location>
        <position position="22"/>
    </location>
</feature>
<protein>
    <recommendedName>
        <fullName evidence="3">Melittin-related peptide FQ-22-1</fullName>
    </recommendedName>
</protein>
<reference evidence="4" key="1">
    <citation type="journal article" date="2009" name="Rapid Commun. Mass Spectrom.">
        <title>Mass spectrometric study of peptides secreted by the skin glands of the brown frog Rana arvalis from the Moscow region.</title>
        <authorList>
            <person name="Samgina T.Y."/>
            <person name="Artemenko K.A."/>
            <person name="Gorshkov V.A."/>
            <person name="Ogourtsov S.V."/>
            <person name="Zubarev R.A."/>
            <person name="Lebedev A.T."/>
        </authorList>
    </citation>
    <scope>PROTEIN SEQUENCE</scope>
    <scope>SUBCELLULAR LOCATION</scope>
    <scope>TISSUE SPECIFICITY</scope>
    <scope>AMIDATION AT GLN-22</scope>
    <source>
        <tissue evidence="1">Skin secretion</tissue>
    </source>
</reference>
<reference key="2">
    <citation type="journal article" date="2022" name="J. Am. Soc. Mass Spectrom.">
        <title>Mass Spectrometry Differentiation between Rana arvalis Populations Based on Their Skin Peptidome Composition.</title>
        <authorList>
            <person name="Samgina T.Y."/>
            <person name="Vasileva I.D."/>
            <person name="Trebse P."/>
            <person name="Torkar G."/>
            <person name="Surin A.K."/>
            <person name="Meng Z."/>
            <person name="Zubarev R.A."/>
            <person name="Lebedev A.T."/>
        </authorList>
    </citation>
    <scope>PROTEIN SEQUENCE</scope>
    <scope>IDENTIFICATION BY MASS SPECTROMETRY</scope>
    <scope>SUBCELLULAR LOCATION</scope>
    <scope>TISSUE SPECIFICITY</scope>
    <source>
        <tissue evidence="3">Skin secretion</tissue>
    </source>
</reference>
<sequence length="22" mass="2364">FVGAALKVLANVLPPVISWIKQ</sequence>
<dbReference type="GO" id="GO:0005576">
    <property type="term" value="C:extracellular region"/>
    <property type="evidence" value="ECO:0000314"/>
    <property type="project" value="UniProtKB"/>
</dbReference>
<dbReference type="GO" id="GO:0004860">
    <property type="term" value="F:protein kinase inhibitor activity"/>
    <property type="evidence" value="ECO:0007669"/>
    <property type="project" value="InterPro"/>
</dbReference>
<dbReference type="GO" id="GO:0006952">
    <property type="term" value="P:defense response"/>
    <property type="evidence" value="ECO:0007669"/>
    <property type="project" value="UniProtKB-KW"/>
</dbReference>
<dbReference type="InterPro" id="IPR002116">
    <property type="entry name" value="Melittin/Api_allergen"/>
</dbReference>
<dbReference type="Pfam" id="PF01372">
    <property type="entry name" value="Melittin"/>
    <property type="match status" value="1"/>
</dbReference>
<keyword id="KW-0027">Amidation</keyword>
<keyword id="KW-0878">Amphibian defense peptide</keyword>
<keyword id="KW-0903">Direct protein sequencing</keyword>
<keyword id="KW-0964">Secreted</keyword>
<evidence type="ECO:0000269" key="1">
    <source>
    </source>
</evidence>
<evidence type="ECO:0000269" key="2">
    <source>
    </source>
</evidence>
<evidence type="ECO:0000303" key="3">
    <source>
    </source>
</evidence>
<evidence type="ECO:0000305" key="4"/>
<organism>
    <name type="scientific">Rana arvalis</name>
    <name type="common">Moor frog</name>
    <dbReference type="NCBI Taxonomy" id="156871"/>
    <lineage>
        <taxon>Eukaryota</taxon>
        <taxon>Metazoa</taxon>
        <taxon>Chordata</taxon>
        <taxon>Craniata</taxon>
        <taxon>Vertebrata</taxon>
        <taxon>Euteleostomi</taxon>
        <taxon>Amphibia</taxon>
        <taxon>Batrachia</taxon>
        <taxon>Anura</taxon>
        <taxon>Neobatrachia</taxon>
        <taxon>Ranoidea</taxon>
        <taxon>Ranidae</taxon>
        <taxon>Rana</taxon>
        <taxon>Rana</taxon>
    </lineage>
</organism>
<proteinExistence type="evidence at protein level"/>
<name>MLP1_RANAR</name>